<accession>Q6NJ64</accession>
<evidence type="ECO:0000255" key="1">
    <source>
        <dbReference type="HAMAP-Rule" id="MF_01306"/>
    </source>
</evidence>
<evidence type="ECO:0000305" key="2"/>
<name>RS4_CORDI</name>
<reference key="1">
    <citation type="journal article" date="2003" name="Nucleic Acids Res.">
        <title>The complete genome sequence and analysis of Corynebacterium diphtheriae NCTC13129.</title>
        <authorList>
            <person name="Cerdeno-Tarraga A.-M."/>
            <person name="Efstratiou A."/>
            <person name="Dover L.G."/>
            <person name="Holden M.T.G."/>
            <person name="Pallen M.J."/>
            <person name="Bentley S.D."/>
            <person name="Besra G.S."/>
            <person name="Churcher C.M."/>
            <person name="James K.D."/>
            <person name="De Zoysa A."/>
            <person name="Chillingworth T."/>
            <person name="Cronin A."/>
            <person name="Dowd L."/>
            <person name="Feltwell T."/>
            <person name="Hamlin N."/>
            <person name="Holroyd S."/>
            <person name="Jagels K."/>
            <person name="Moule S."/>
            <person name="Quail M.A."/>
            <person name="Rabbinowitsch E."/>
            <person name="Rutherford K.M."/>
            <person name="Thomson N.R."/>
            <person name="Unwin L."/>
            <person name="Whitehead S."/>
            <person name="Barrell B.G."/>
            <person name="Parkhill J."/>
        </authorList>
    </citation>
    <scope>NUCLEOTIDE SEQUENCE [LARGE SCALE GENOMIC DNA]</scope>
    <source>
        <strain>ATCC 700971 / NCTC 13129 / Biotype gravis</strain>
    </source>
</reference>
<dbReference type="EMBL" id="BX248355">
    <property type="protein sequence ID" value="CAE49059.1"/>
    <property type="molecule type" value="Genomic_DNA"/>
</dbReference>
<dbReference type="RefSeq" id="WP_004566857.1">
    <property type="nucleotide sequence ID" value="NC_002935.2"/>
</dbReference>
<dbReference type="SMR" id="Q6NJ64"/>
<dbReference type="STRING" id="257309.DIP0548"/>
<dbReference type="GeneID" id="97331157"/>
<dbReference type="KEGG" id="cdi:DIP0548"/>
<dbReference type="HOGENOM" id="CLU_092403_0_2_11"/>
<dbReference type="Proteomes" id="UP000002198">
    <property type="component" value="Chromosome"/>
</dbReference>
<dbReference type="GO" id="GO:0015935">
    <property type="term" value="C:small ribosomal subunit"/>
    <property type="evidence" value="ECO:0007669"/>
    <property type="project" value="InterPro"/>
</dbReference>
<dbReference type="GO" id="GO:0019843">
    <property type="term" value="F:rRNA binding"/>
    <property type="evidence" value="ECO:0007669"/>
    <property type="project" value="UniProtKB-UniRule"/>
</dbReference>
<dbReference type="GO" id="GO:0003735">
    <property type="term" value="F:structural constituent of ribosome"/>
    <property type="evidence" value="ECO:0007669"/>
    <property type="project" value="InterPro"/>
</dbReference>
<dbReference type="GO" id="GO:0042274">
    <property type="term" value="P:ribosomal small subunit biogenesis"/>
    <property type="evidence" value="ECO:0007669"/>
    <property type="project" value="TreeGrafter"/>
</dbReference>
<dbReference type="GO" id="GO:0006412">
    <property type="term" value="P:translation"/>
    <property type="evidence" value="ECO:0007669"/>
    <property type="project" value="UniProtKB-UniRule"/>
</dbReference>
<dbReference type="CDD" id="cd00165">
    <property type="entry name" value="S4"/>
    <property type="match status" value="1"/>
</dbReference>
<dbReference type="FunFam" id="3.10.290.10:FF:000001">
    <property type="entry name" value="30S ribosomal protein S4"/>
    <property type="match status" value="1"/>
</dbReference>
<dbReference type="Gene3D" id="1.10.1050.10">
    <property type="entry name" value="Ribosomal Protein S4 Delta 41, Chain A, domain 1"/>
    <property type="match status" value="1"/>
</dbReference>
<dbReference type="Gene3D" id="3.10.290.10">
    <property type="entry name" value="RNA-binding S4 domain"/>
    <property type="match status" value="1"/>
</dbReference>
<dbReference type="HAMAP" id="MF_01306_B">
    <property type="entry name" value="Ribosomal_uS4_B"/>
    <property type="match status" value="1"/>
</dbReference>
<dbReference type="InterPro" id="IPR022801">
    <property type="entry name" value="Ribosomal_uS4"/>
</dbReference>
<dbReference type="InterPro" id="IPR005709">
    <property type="entry name" value="Ribosomal_uS4_bac-type"/>
</dbReference>
<dbReference type="InterPro" id="IPR018079">
    <property type="entry name" value="Ribosomal_uS4_CS"/>
</dbReference>
<dbReference type="InterPro" id="IPR001912">
    <property type="entry name" value="Ribosomal_uS4_N"/>
</dbReference>
<dbReference type="InterPro" id="IPR002942">
    <property type="entry name" value="S4_RNA-bd"/>
</dbReference>
<dbReference type="InterPro" id="IPR036986">
    <property type="entry name" value="S4_RNA-bd_sf"/>
</dbReference>
<dbReference type="NCBIfam" id="NF003717">
    <property type="entry name" value="PRK05327.1"/>
    <property type="match status" value="1"/>
</dbReference>
<dbReference type="NCBIfam" id="TIGR01017">
    <property type="entry name" value="rpsD_bact"/>
    <property type="match status" value="1"/>
</dbReference>
<dbReference type="PANTHER" id="PTHR11831">
    <property type="entry name" value="30S 40S RIBOSOMAL PROTEIN"/>
    <property type="match status" value="1"/>
</dbReference>
<dbReference type="PANTHER" id="PTHR11831:SF4">
    <property type="entry name" value="SMALL RIBOSOMAL SUBUNIT PROTEIN US4M"/>
    <property type="match status" value="1"/>
</dbReference>
<dbReference type="Pfam" id="PF00163">
    <property type="entry name" value="Ribosomal_S4"/>
    <property type="match status" value="1"/>
</dbReference>
<dbReference type="Pfam" id="PF01479">
    <property type="entry name" value="S4"/>
    <property type="match status" value="1"/>
</dbReference>
<dbReference type="SMART" id="SM01390">
    <property type="entry name" value="Ribosomal_S4"/>
    <property type="match status" value="1"/>
</dbReference>
<dbReference type="SMART" id="SM00363">
    <property type="entry name" value="S4"/>
    <property type="match status" value="1"/>
</dbReference>
<dbReference type="SUPFAM" id="SSF55174">
    <property type="entry name" value="Alpha-L RNA-binding motif"/>
    <property type="match status" value="1"/>
</dbReference>
<dbReference type="PROSITE" id="PS00632">
    <property type="entry name" value="RIBOSOMAL_S4"/>
    <property type="match status" value="1"/>
</dbReference>
<dbReference type="PROSITE" id="PS50889">
    <property type="entry name" value="S4"/>
    <property type="match status" value="1"/>
</dbReference>
<keyword id="KW-1185">Reference proteome</keyword>
<keyword id="KW-0687">Ribonucleoprotein</keyword>
<keyword id="KW-0689">Ribosomal protein</keyword>
<keyword id="KW-0694">RNA-binding</keyword>
<keyword id="KW-0699">rRNA-binding</keyword>
<protein>
    <recommendedName>
        <fullName evidence="1">Small ribosomal subunit protein uS4</fullName>
    </recommendedName>
    <alternativeName>
        <fullName evidence="2">30S ribosomal protein S4</fullName>
    </alternativeName>
</protein>
<proteinExistence type="inferred from homology"/>
<comment type="function">
    <text evidence="1">One of the primary rRNA binding proteins, it binds directly to 16S rRNA where it nucleates assembly of the body of the 30S subunit.</text>
</comment>
<comment type="function">
    <text evidence="1">With S5 and S12 plays an important role in translational accuracy.</text>
</comment>
<comment type="subunit">
    <text evidence="1">Part of the 30S ribosomal subunit. Contacts protein S5. The interaction surface between S4 and S5 is involved in control of translational fidelity.</text>
</comment>
<comment type="similarity">
    <text evidence="1">Belongs to the universal ribosomal protein uS4 family.</text>
</comment>
<sequence>MARYTGPATRKSRRLRVDLVGGDMAFERRPYPPGQAGRARIKESEYLLQLQEKQKARFTYGVLEKQFRRYYAEANRLPGKTGDNLVILLESRLDNVVYRAGLARTRRQARQLVSHGHFTVNGKKINVPSYRVSQYDIIDVREKSQKMIWFEEAQENLLDAVVPAWLQVVPSTLRILVHQLPERAQIDVPLQEQLIVELYSK</sequence>
<gene>
    <name evidence="1" type="primary">rpsD</name>
    <name type="ordered locus">DIP0548</name>
</gene>
<organism>
    <name type="scientific">Corynebacterium diphtheriae (strain ATCC 700971 / NCTC 13129 / Biotype gravis)</name>
    <dbReference type="NCBI Taxonomy" id="257309"/>
    <lineage>
        <taxon>Bacteria</taxon>
        <taxon>Bacillati</taxon>
        <taxon>Actinomycetota</taxon>
        <taxon>Actinomycetes</taxon>
        <taxon>Mycobacteriales</taxon>
        <taxon>Corynebacteriaceae</taxon>
        <taxon>Corynebacterium</taxon>
    </lineage>
</organism>
<feature type="chain" id="PRO_0000132373" description="Small ribosomal subunit protein uS4">
    <location>
        <begin position="1"/>
        <end position="201"/>
    </location>
</feature>
<feature type="domain" description="S4 RNA-binding" evidence="1">
    <location>
        <begin position="91"/>
        <end position="151"/>
    </location>
</feature>